<organism>
    <name type="scientific">Escherichia coli O45:K1 (strain S88 / ExPEC)</name>
    <dbReference type="NCBI Taxonomy" id="585035"/>
    <lineage>
        <taxon>Bacteria</taxon>
        <taxon>Pseudomonadati</taxon>
        <taxon>Pseudomonadota</taxon>
        <taxon>Gammaproteobacteria</taxon>
        <taxon>Enterobacterales</taxon>
        <taxon>Enterobacteriaceae</taxon>
        <taxon>Escherichia</taxon>
    </lineage>
</organism>
<dbReference type="EMBL" id="CU928161">
    <property type="protein sequence ID" value="CAR05110.1"/>
    <property type="molecule type" value="Genomic_DNA"/>
</dbReference>
<dbReference type="RefSeq" id="WP_000626187.1">
    <property type="nucleotide sequence ID" value="NC_011742.1"/>
</dbReference>
<dbReference type="SMR" id="B7MEI9"/>
<dbReference type="GeneID" id="93778499"/>
<dbReference type="KEGG" id="ecz:ECS88_3898"/>
<dbReference type="HOGENOM" id="CLU_151816_0_0_6"/>
<dbReference type="Proteomes" id="UP000000747">
    <property type="component" value="Chromosome"/>
</dbReference>
<dbReference type="GO" id="GO:0005886">
    <property type="term" value="C:plasma membrane"/>
    <property type="evidence" value="ECO:0007669"/>
    <property type="project" value="UniProtKB-SubCell"/>
</dbReference>
<dbReference type="HAMAP" id="MF_01088">
    <property type="entry name" value="UspB"/>
    <property type="match status" value="1"/>
</dbReference>
<dbReference type="InterPro" id="IPR019598">
    <property type="entry name" value="Universal_stress_protein_B"/>
</dbReference>
<dbReference type="NCBIfam" id="NF003435">
    <property type="entry name" value="PRK04960.1"/>
    <property type="match status" value="1"/>
</dbReference>
<dbReference type="Pfam" id="PF10625">
    <property type="entry name" value="UspB"/>
    <property type="match status" value="1"/>
</dbReference>
<proteinExistence type="inferred from homology"/>
<name>USPB_ECO45</name>
<sequence>MISTVALFWALCVVCIVNMARYFSSLRALLVVLRNCDPLLYQYVDGGGFFTSHGQPNKQVRLVWYIYAQRYRDHHDDEFIRRCERVRRQFILTSALCGLVVVSLIALMIWH</sequence>
<feature type="chain" id="PRO_1000136911" description="Universal stress protein B">
    <location>
        <begin position="1"/>
        <end position="111"/>
    </location>
</feature>
<feature type="transmembrane region" description="Helical" evidence="1">
    <location>
        <begin position="1"/>
        <end position="21"/>
    </location>
</feature>
<feature type="transmembrane region" description="Helical" evidence="1">
    <location>
        <begin position="90"/>
        <end position="110"/>
    </location>
</feature>
<comment type="subcellular location">
    <subcellularLocation>
        <location evidence="1">Cell inner membrane</location>
        <topology evidence="1">Multi-pass membrane protein</topology>
    </subcellularLocation>
</comment>
<comment type="similarity">
    <text evidence="1">Belongs to the universal stress protein B family.</text>
</comment>
<keyword id="KW-0997">Cell inner membrane</keyword>
<keyword id="KW-1003">Cell membrane</keyword>
<keyword id="KW-0472">Membrane</keyword>
<keyword id="KW-1185">Reference proteome</keyword>
<keyword id="KW-0812">Transmembrane</keyword>
<keyword id="KW-1133">Transmembrane helix</keyword>
<accession>B7MEI9</accession>
<evidence type="ECO:0000255" key="1">
    <source>
        <dbReference type="HAMAP-Rule" id="MF_01088"/>
    </source>
</evidence>
<reference key="1">
    <citation type="journal article" date="2009" name="PLoS Genet.">
        <title>Organised genome dynamics in the Escherichia coli species results in highly diverse adaptive paths.</title>
        <authorList>
            <person name="Touchon M."/>
            <person name="Hoede C."/>
            <person name="Tenaillon O."/>
            <person name="Barbe V."/>
            <person name="Baeriswyl S."/>
            <person name="Bidet P."/>
            <person name="Bingen E."/>
            <person name="Bonacorsi S."/>
            <person name="Bouchier C."/>
            <person name="Bouvet O."/>
            <person name="Calteau A."/>
            <person name="Chiapello H."/>
            <person name="Clermont O."/>
            <person name="Cruveiller S."/>
            <person name="Danchin A."/>
            <person name="Diard M."/>
            <person name="Dossat C."/>
            <person name="Karoui M.E."/>
            <person name="Frapy E."/>
            <person name="Garry L."/>
            <person name="Ghigo J.M."/>
            <person name="Gilles A.M."/>
            <person name="Johnson J."/>
            <person name="Le Bouguenec C."/>
            <person name="Lescat M."/>
            <person name="Mangenot S."/>
            <person name="Martinez-Jehanne V."/>
            <person name="Matic I."/>
            <person name="Nassif X."/>
            <person name="Oztas S."/>
            <person name="Petit M.A."/>
            <person name="Pichon C."/>
            <person name="Rouy Z."/>
            <person name="Ruf C.S."/>
            <person name="Schneider D."/>
            <person name="Tourret J."/>
            <person name="Vacherie B."/>
            <person name="Vallenet D."/>
            <person name="Medigue C."/>
            <person name="Rocha E.P.C."/>
            <person name="Denamur E."/>
        </authorList>
    </citation>
    <scope>NUCLEOTIDE SEQUENCE [LARGE SCALE GENOMIC DNA]</scope>
    <source>
        <strain>S88 / ExPEC</strain>
    </source>
</reference>
<protein>
    <recommendedName>
        <fullName evidence="1">Universal stress protein B</fullName>
    </recommendedName>
</protein>
<gene>
    <name evidence="1" type="primary">uspB</name>
    <name type="ordered locus">ECS88_3898</name>
</gene>